<organism>
    <name type="scientific">Francisella tularensis subsp. holarctica (strain LVS)</name>
    <dbReference type="NCBI Taxonomy" id="376619"/>
    <lineage>
        <taxon>Bacteria</taxon>
        <taxon>Pseudomonadati</taxon>
        <taxon>Pseudomonadota</taxon>
        <taxon>Gammaproteobacteria</taxon>
        <taxon>Thiotrichales</taxon>
        <taxon>Francisellaceae</taxon>
        <taxon>Francisella</taxon>
    </lineage>
</organism>
<sequence length="101" mass="11718">MAKKSMIQRELKREKLVAKYAQKRAEFKAIILDINSTEEQIWEAQIKLQKLPVNSSASRVQRRCKVTGRPHAVYRKFGLCRNKLREYAMAGDVPGLKKASW</sequence>
<reference key="1">
    <citation type="submission" date="2006-03" db="EMBL/GenBank/DDBJ databases">
        <title>Complete genome sequence of Francisella tularensis LVS (Live Vaccine Strain).</title>
        <authorList>
            <person name="Chain P."/>
            <person name="Larimer F."/>
            <person name="Land M."/>
            <person name="Stilwagen S."/>
            <person name="Larsson P."/>
            <person name="Bearden S."/>
            <person name="Chu M."/>
            <person name="Oyston P."/>
            <person name="Forsman M."/>
            <person name="Andersson S."/>
            <person name="Lindler L."/>
            <person name="Titball R."/>
            <person name="Garcia E."/>
        </authorList>
    </citation>
    <scope>NUCLEOTIDE SEQUENCE [LARGE SCALE GENOMIC DNA]</scope>
    <source>
        <strain>LVS</strain>
    </source>
</reference>
<name>RS14_FRATH</name>
<protein>
    <recommendedName>
        <fullName evidence="1">Small ribosomal subunit protein uS14</fullName>
    </recommendedName>
    <alternativeName>
        <fullName evidence="2">30S ribosomal protein S14</fullName>
    </alternativeName>
</protein>
<accession>Q2A5F7</accession>
<comment type="function">
    <text evidence="1">Binds 16S rRNA, required for the assembly of 30S particles and may also be responsible for determining the conformation of the 16S rRNA at the A site.</text>
</comment>
<comment type="subunit">
    <text evidence="1">Part of the 30S ribosomal subunit. Contacts proteins S3 and S10.</text>
</comment>
<comment type="similarity">
    <text evidence="1">Belongs to the universal ribosomal protein uS14 family.</text>
</comment>
<keyword id="KW-1185">Reference proteome</keyword>
<keyword id="KW-0687">Ribonucleoprotein</keyword>
<keyword id="KW-0689">Ribosomal protein</keyword>
<keyword id="KW-0694">RNA-binding</keyword>
<keyword id="KW-0699">rRNA-binding</keyword>
<evidence type="ECO:0000255" key="1">
    <source>
        <dbReference type="HAMAP-Rule" id="MF_00537"/>
    </source>
</evidence>
<evidence type="ECO:0000305" key="2"/>
<dbReference type="EMBL" id="AM233362">
    <property type="protein sequence ID" value="CAJ78690.1"/>
    <property type="molecule type" value="Genomic_DNA"/>
</dbReference>
<dbReference type="RefSeq" id="WP_003014354.1">
    <property type="nucleotide sequence ID" value="NZ_CP009694.1"/>
</dbReference>
<dbReference type="SMR" id="Q2A5F7"/>
<dbReference type="KEGG" id="ftl:FTL_0249"/>
<dbReference type="Proteomes" id="UP000001944">
    <property type="component" value="Chromosome"/>
</dbReference>
<dbReference type="GO" id="GO:0005737">
    <property type="term" value="C:cytoplasm"/>
    <property type="evidence" value="ECO:0007669"/>
    <property type="project" value="UniProtKB-ARBA"/>
</dbReference>
<dbReference type="GO" id="GO:0015935">
    <property type="term" value="C:small ribosomal subunit"/>
    <property type="evidence" value="ECO:0007669"/>
    <property type="project" value="TreeGrafter"/>
</dbReference>
<dbReference type="GO" id="GO:0019843">
    <property type="term" value="F:rRNA binding"/>
    <property type="evidence" value="ECO:0007669"/>
    <property type="project" value="UniProtKB-UniRule"/>
</dbReference>
<dbReference type="GO" id="GO:0003735">
    <property type="term" value="F:structural constituent of ribosome"/>
    <property type="evidence" value="ECO:0007669"/>
    <property type="project" value="InterPro"/>
</dbReference>
<dbReference type="GO" id="GO:0006412">
    <property type="term" value="P:translation"/>
    <property type="evidence" value="ECO:0007669"/>
    <property type="project" value="UniProtKB-UniRule"/>
</dbReference>
<dbReference type="FunFam" id="1.10.287.1480:FF:000001">
    <property type="entry name" value="30S ribosomal protein S14"/>
    <property type="match status" value="1"/>
</dbReference>
<dbReference type="Gene3D" id="1.10.287.1480">
    <property type="match status" value="1"/>
</dbReference>
<dbReference type="HAMAP" id="MF_00537">
    <property type="entry name" value="Ribosomal_uS14_1"/>
    <property type="match status" value="1"/>
</dbReference>
<dbReference type="InterPro" id="IPR001209">
    <property type="entry name" value="Ribosomal_uS14"/>
</dbReference>
<dbReference type="InterPro" id="IPR023036">
    <property type="entry name" value="Ribosomal_uS14_bac/plastid"/>
</dbReference>
<dbReference type="InterPro" id="IPR018271">
    <property type="entry name" value="Ribosomal_uS14_CS"/>
</dbReference>
<dbReference type="NCBIfam" id="NF006477">
    <property type="entry name" value="PRK08881.1"/>
    <property type="match status" value="1"/>
</dbReference>
<dbReference type="PANTHER" id="PTHR19836">
    <property type="entry name" value="30S RIBOSOMAL PROTEIN S14"/>
    <property type="match status" value="1"/>
</dbReference>
<dbReference type="PANTHER" id="PTHR19836:SF19">
    <property type="entry name" value="SMALL RIBOSOMAL SUBUNIT PROTEIN US14M"/>
    <property type="match status" value="1"/>
</dbReference>
<dbReference type="Pfam" id="PF00253">
    <property type="entry name" value="Ribosomal_S14"/>
    <property type="match status" value="1"/>
</dbReference>
<dbReference type="SUPFAM" id="SSF57716">
    <property type="entry name" value="Glucocorticoid receptor-like (DNA-binding domain)"/>
    <property type="match status" value="1"/>
</dbReference>
<dbReference type="PROSITE" id="PS00527">
    <property type="entry name" value="RIBOSOMAL_S14"/>
    <property type="match status" value="1"/>
</dbReference>
<proteinExistence type="inferred from homology"/>
<feature type="chain" id="PRO_0000269047" description="Small ribosomal subunit protein uS14">
    <location>
        <begin position="1"/>
        <end position="101"/>
    </location>
</feature>
<gene>
    <name evidence="1" type="primary">rpsN</name>
    <name type="ordered locus">FTL_0249</name>
</gene>